<feature type="chain" id="PRO_1000065393" description="Redox-sensing transcriptional repressor Rex">
    <location>
        <begin position="1"/>
        <end position="210"/>
    </location>
</feature>
<feature type="DNA-binding region" description="H-T-H motif" evidence="1">
    <location>
        <begin position="17"/>
        <end position="56"/>
    </location>
</feature>
<feature type="binding site" evidence="1">
    <location>
        <begin position="91"/>
        <end position="96"/>
    </location>
    <ligand>
        <name>NAD(+)</name>
        <dbReference type="ChEBI" id="CHEBI:57540"/>
    </ligand>
</feature>
<keyword id="KW-0963">Cytoplasm</keyword>
<keyword id="KW-0238">DNA-binding</keyword>
<keyword id="KW-0520">NAD</keyword>
<keyword id="KW-0678">Repressor</keyword>
<keyword id="KW-0804">Transcription</keyword>
<keyword id="KW-0805">Transcription regulation</keyword>
<sequence>MDKKKNISMAVIRRLPKYHRYLYELLKNDVDRISSKELSEKIGFTASQIRQDLNCFGDFGQQGYGYNVSELHHQISNILGLNNPYNIIIIGAGNIGQALANYTRFSKLGFNVKAMFDTNPKLIGLKIREIEILDIDYLSSYLEKNNIDIGIICVPHDNAQKVANILVKNDIKGIWNFAPIDLSVPEDVVVENVHLSDSLLTLTCLINKTE</sequence>
<evidence type="ECO:0000255" key="1">
    <source>
        <dbReference type="HAMAP-Rule" id="MF_01131"/>
    </source>
</evidence>
<organism>
    <name type="scientific">Clostridium botulinum (strain ATCC 19397 / Type A)</name>
    <dbReference type="NCBI Taxonomy" id="441770"/>
    <lineage>
        <taxon>Bacteria</taxon>
        <taxon>Bacillati</taxon>
        <taxon>Bacillota</taxon>
        <taxon>Clostridia</taxon>
        <taxon>Eubacteriales</taxon>
        <taxon>Clostridiaceae</taxon>
        <taxon>Clostridium</taxon>
    </lineage>
</organism>
<dbReference type="EMBL" id="CP000726">
    <property type="protein sequence ID" value="ABS35247.1"/>
    <property type="molecule type" value="Genomic_DNA"/>
</dbReference>
<dbReference type="RefSeq" id="WP_003357537.1">
    <property type="nucleotide sequence ID" value="NC_009697.1"/>
</dbReference>
<dbReference type="SMR" id="A7FYQ1"/>
<dbReference type="KEGG" id="cba:CLB_3362"/>
<dbReference type="HOGENOM" id="CLU_061534_1_0_9"/>
<dbReference type="GO" id="GO:0005737">
    <property type="term" value="C:cytoplasm"/>
    <property type="evidence" value="ECO:0007669"/>
    <property type="project" value="UniProtKB-SubCell"/>
</dbReference>
<dbReference type="GO" id="GO:0003677">
    <property type="term" value="F:DNA binding"/>
    <property type="evidence" value="ECO:0007669"/>
    <property type="project" value="UniProtKB-UniRule"/>
</dbReference>
<dbReference type="GO" id="GO:0003700">
    <property type="term" value="F:DNA-binding transcription factor activity"/>
    <property type="evidence" value="ECO:0007669"/>
    <property type="project" value="UniProtKB-UniRule"/>
</dbReference>
<dbReference type="GO" id="GO:0045892">
    <property type="term" value="P:negative regulation of DNA-templated transcription"/>
    <property type="evidence" value="ECO:0007669"/>
    <property type="project" value="InterPro"/>
</dbReference>
<dbReference type="GO" id="GO:0051775">
    <property type="term" value="P:response to redox state"/>
    <property type="evidence" value="ECO:0007669"/>
    <property type="project" value="InterPro"/>
</dbReference>
<dbReference type="Gene3D" id="3.40.50.720">
    <property type="entry name" value="NAD(P)-binding Rossmann-like Domain"/>
    <property type="match status" value="1"/>
</dbReference>
<dbReference type="Gene3D" id="1.10.10.10">
    <property type="entry name" value="Winged helix-like DNA-binding domain superfamily/Winged helix DNA-binding domain"/>
    <property type="match status" value="1"/>
</dbReference>
<dbReference type="HAMAP" id="MF_01131">
    <property type="entry name" value="Rex"/>
    <property type="match status" value="1"/>
</dbReference>
<dbReference type="InterPro" id="IPR003781">
    <property type="entry name" value="CoA-bd"/>
</dbReference>
<dbReference type="InterPro" id="IPR036291">
    <property type="entry name" value="NAD(P)-bd_dom_sf"/>
</dbReference>
<dbReference type="InterPro" id="IPR009718">
    <property type="entry name" value="Rex_DNA-bd_C_dom"/>
</dbReference>
<dbReference type="InterPro" id="IPR022876">
    <property type="entry name" value="Tscrpt_rep_Rex"/>
</dbReference>
<dbReference type="InterPro" id="IPR036388">
    <property type="entry name" value="WH-like_DNA-bd_sf"/>
</dbReference>
<dbReference type="InterPro" id="IPR036390">
    <property type="entry name" value="WH_DNA-bd_sf"/>
</dbReference>
<dbReference type="NCBIfam" id="NF003989">
    <property type="entry name" value="PRK05472.1-3"/>
    <property type="match status" value="1"/>
</dbReference>
<dbReference type="NCBIfam" id="NF003990">
    <property type="entry name" value="PRK05472.1-4"/>
    <property type="match status" value="1"/>
</dbReference>
<dbReference type="NCBIfam" id="NF003993">
    <property type="entry name" value="PRK05472.2-2"/>
    <property type="match status" value="1"/>
</dbReference>
<dbReference type="NCBIfam" id="NF003994">
    <property type="entry name" value="PRK05472.2-3"/>
    <property type="match status" value="1"/>
</dbReference>
<dbReference type="NCBIfam" id="NF003995">
    <property type="entry name" value="PRK05472.2-4"/>
    <property type="match status" value="1"/>
</dbReference>
<dbReference type="NCBIfam" id="NF003996">
    <property type="entry name" value="PRK05472.2-5"/>
    <property type="match status" value="1"/>
</dbReference>
<dbReference type="PANTHER" id="PTHR35786">
    <property type="entry name" value="REDOX-SENSING TRANSCRIPTIONAL REPRESSOR REX"/>
    <property type="match status" value="1"/>
</dbReference>
<dbReference type="PANTHER" id="PTHR35786:SF1">
    <property type="entry name" value="REDOX-SENSING TRANSCRIPTIONAL REPRESSOR REX 1"/>
    <property type="match status" value="1"/>
</dbReference>
<dbReference type="Pfam" id="PF02629">
    <property type="entry name" value="CoA_binding"/>
    <property type="match status" value="1"/>
</dbReference>
<dbReference type="Pfam" id="PF06971">
    <property type="entry name" value="Put_DNA-bind_N"/>
    <property type="match status" value="1"/>
</dbReference>
<dbReference type="SMART" id="SM00881">
    <property type="entry name" value="CoA_binding"/>
    <property type="match status" value="1"/>
</dbReference>
<dbReference type="SUPFAM" id="SSF51735">
    <property type="entry name" value="NAD(P)-binding Rossmann-fold domains"/>
    <property type="match status" value="1"/>
</dbReference>
<dbReference type="SUPFAM" id="SSF46785">
    <property type="entry name" value="Winged helix' DNA-binding domain"/>
    <property type="match status" value="1"/>
</dbReference>
<comment type="function">
    <text evidence="1">Modulates transcription in response to changes in cellular NADH/NAD(+) redox state.</text>
</comment>
<comment type="subunit">
    <text evidence="1">Homodimer.</text>
</comment>
<comment type="subcellular location">
    <subcellularLocation>
        <location evidence="1">Cytoplasm</location>
    </subcellularLocation>
</comment>
<comment type="similarity">
    <text evidence="1">Belongs to the transcriptional regulatory Rex family.</text>
</comment>
<gene>
    <name evidence="1" type="primary">rex</name>
    <name type="ordered locus">CLB_3362</name>
</gene>
<name>REX_CLOB1</name>
<reference key="1">
    <citation type="journal article" date="2007" name="PLoS ONE">
        <title>Analysis of the neurotoxin complex genes in Clostridium botulinum A1-A4 and B1 strains: BoNT/A3, /Ba4 and /B1 clusters are located within plasmids.</title>
        <authorList>
            <person name="Smith T.J."/>
            <person name="Hill K.K."/>
            <person name="Foley B.T."/>
            <person name="Detter J.C."/>
            <person name="Munk A.C."/>
            <person name="Bruce D.C."/>
            <person name="Doggett N.A."/>
            <person name="Smith L.A."/>
            <person name="Marks J.D."/>
            <person name="Xie G."/>
            <person name="Brettin T.S."/>
        </authorList>
    </citation>
    <scope>NUCLEOTIDE SEQUENCE [LARGE SCALE GENOMIC DNA]</scope>
    <source>
        <strain>ATCC 19397 / Type A</strain>
    </source>
</reference>
<protein>
    <recommendedName>
        <fullName evidence="1">Redox-sensing transcriptional repressor Rex</fullName>
    </recommendedName>
</protein>
<accession>A7FYQ1</accession>
<proteinExistence type="inferred from homology"/>